<organism>
    <name type="scientific">Chlorobium luteolum (strain DSM 273 / BCRC 81028 / 2530)</name>
    <name type="common">Pelodictyon luteolum</name>
    <dbReference type="NCBI Taxonomy" id="319225"/>
    <lineage>
        <taxon>Bacteria</taxon>
        <taxon>Pseudomonadati</taxon>
        <taxon>Chlorobiota</taxon>
        <taxon>Chlorobiia</taxon>
        <taxon>Chlorobiales</taxon>
        <taxon>Chlorobiaceae</taxon>
        <taxon>Chlorobium/Pelodictyon group</taxon>
        <taxon>Pelodictyon</taxon>
    </lineage>
</organism>
<evidence type="ECO:0000255" key="1">
    <source>
        <dbReference type="HAMAP-Rule" id="MF_00173"/>
    </source>
</evidence>
<gene>
    <name evidence="1" type="primary">argR</name>
    <name type="ordered locus">Plut_1045</name>
</gene>
<protein>
    <recommendedName>
        <fullName evidence="1">Arginine repressor</fullName>
    </recommendedName>
</protein>
<comment type="function">
    <text evidence="1">Regulates arginine biosynthesis genes.</text>
</comment>
<comment type="pathway">
    <text>Amino-acid biosynthesis; L-arginine biosynthesis [regulation].</text>
</comment>
<comment type="subcellular location">
    <subcellularLocation>
        <location evidence="1">Cytoplasm</location>
    </subcellularLocation>
</comment>
<comment type="similarity">
    <text evidence="1">Belongs to the ArgR family.</text>
</comment>
<accession>Q3B424</accession>
<reference key="1">
    <citation type="submission" date="2005-08" db="EMBL/GenBank/DDBJ databases">
        <title>Complete sequence of Pelodictyon luteolum DSM 273.</title>
        <authorList>
            <consortium name="US DOE Joint Genome Institute"/>
            <person name="Copeland A."/>
            <person name="Lucas S."/>
            <person name="Lapidus A."/>
            <person name="Barry K."/>
            <person name="Detter J.C."/>
            <person name="Glavina T."/>
            <person name="Hammon N."/>
            <person name="Israni S."/>
            <person name="Pitluck S."/>
            <person name="Bryant D."/>
            <person name="Schmutz J."/>
            <person name="Larimer F."/>
            <person name="Land M."/>
            <person name="Kyrpides N."/>
            <person name="Ivanova N."/>
            <person name="Richardson P."/>
        </authorList>
    </citation>
    <scope>NUCLEOTIDE SEQUENCE [LARGE SCALE GENOMIC DNA]</scope>
    <source>
        <strain>DSM 273 / BCRC 81028 / 2530</strain>
    </source>
</reference>
<feature type="chain" id="PRO_1000023584" description="Arginine repressor">
    <location>
        <begin position="1"/>
        <end position="148"/>
    </location>
</feature>
<proteinExistence type="inferred from homology"/>
<keyword id="KW-0028">Amino-acid biosynthesis</keyword>
<keyword id="KW-0055">Arginine biosynthesis</keyword>
<keyword id="KW-0963">Cytoplasm</keyword>
<keyword id="KW-0238">DNA-binding</keyword>
<keyword id="KW-1185">Reference proteome</keyword>
<keyword id="KW-0678">Repressor</keyword>
<keyword id="KW-0804">Transcription</keyword>
<keyword id="KW-0805">Transcription regulation</keyword>
<dbReference type="EMBL" id="CP000096">
    <property type="protein sequence ID" value="ABB23907.1"/>
    <property type="molecule type" value="Genomic_DNA"/>
</dbReference>
<dbReference type="RefSeq" id="WP_011357779.1">
    <property type="nucleotide sequence ID" value="NC_007512.1"/>
</dbReference>
<dbReference type="SMR" id="Q3B424"/>
<dbReference type="STRING" id="319225.Plut_1045"/>
<dbReference type="KEGG" id="plt:Plut_1045"/>
<dbReference type="eggNOG" id="COG1438">
    <property type="taxonomic scope" value="Bacteria"/>
</dbReference>
<dbReference type="HOGENOM" id="CLU_097103_3_0_10"/>
<dbReference type="OrthoDB" id="9807089at2"/>
<dbReference type="UniPathway" id="UPA00068"/>
<dbReference type="Proteomes" id="UP000002709">
    <property type="component" value="Chromosome"/>
</dbReference>
<dbReference type="GO" id="GO:0005737">
    <property type="term" value="C:cytoplasm"/>
    <property type="evidence" value="ECO:0007669"/>
    <property type="project" value="UniProtKB-SubCell"/>
</dbReference>
<dbReference type="GO" id="GO:0034618">
    <property type="term" value="F:arginine binding"/>
    <property type="evidence" value="ECO:0007669"/>
    <property type="project" value="InterPro"/>
</dbReference>
<dbReference type="GO" id="GO:0003677">
    <property type="term" value="F:DNA binding"/>
    <property type="evidence" value="ECO:0007669"/>
    <property type="project" value="UniProtKB-KW"/>
</dbReference>
<dbReference type="GO" id="GO:0003700">
    <property type="term" value="F:DNA-binding transcription factor activity"/>
    <property type="evidence" value="ECO:0007669"/>
    <property type="project" value="UniProtKB-UniRule"/>
</dbReference>
<dbReference type="GO" id="GO:0006526">
    <property type="term" value="P:L-arginine biosynthetic process"/>
    <property type="evidence" value="ECO:0007669"/>
    <property type="project" value="UniProtKB-UniPathway"/>
</dbReference>
<dbReference type="GO" id="GO:0051259">
    <property type="term" value="P:protein complex oligomerization"/>
    <property type="evidence" value="ECO:0007669"/>
    <property type="project" value="InterPro"/>
</dbReference>
<dbReference type="GO" id="GO:1900079">
    <property type="term" value="P:regulation of arginine biosynthetic process"/>
    <property type="evidence" value="ECO:0007669"/>
    <property type="project" value="UniProtKB-UniRule"/>
</dbReference>
<dbReference type="Gene3D" id="3.30.1360.40">
    <property type="match status" value="1"/>
</dbReference>
<dbReference type="Gene3D" id="1.10.10.10">
    <property type="entry name" value="Winged helix-like DNA-binding domain superfamily/Winged helix DNA-binding domain"/>
    <property type="match status" value="1"/>
</dbReference>
<dbReference type="HAMAP" id="MF_00173">
    <property type="entry name" value="Arg_repressor"/>
    <property type="match status" value="1"/>
</dbReference>
<dbReference type="InterPro" id="IPR001669">
    <property type="entry name" value="Arg_repress"/>
</dbReference>
<dbReference type="InterPro" id="IPR020899">
    <property type="entry name" value="Arg_repress_C"/>
</dbReference>
<dbReference type="InterPro" id="IPR036251">
    <property type="entry name" value="Arg_repress_C_sf"/>
</dbReference>
<dbReference type="InterPro" id="IPR020900">
    <property type="entry name" value="Arg_repress_DNA-bd"/>
</dbReference>
<dbReference type="InterPro" id="IPR036388">
    <property type="entry name" value="WH-like_DNA-bd_sf"/>
</dbReference>
<dbReference type="InterPro" id="IPR036390">
    <property type="entry name" value="WH_DNA-bd_sf"/>
</dbReference>
<dbReference type="PANTHER" id="PTHR34471">
    <property type="entry name" value="ARGININE REPRESSOR"/>
    <property type="match status" value="1"/>
</dbReference>
<dbReference type="PANTHER" id="PTHR34471:SF1">
    <property type="entry name" value="ARGININE REPRESSOR"/>
    <property type="match status" value="1"/>
</dbReference>
<dbReference type="Pfam" id="PF01316">
    <property type="entry name" value="Arg_repressor"/>
    <property type="match status" value="1"/>
</dbReference>
<dbReference type="Pfam" id="PF02863">
    <property type="entry name" value="Arg_repressor_C"/>
    <property type="match status" value="1"/>
</dbReference>
<dbReference type="PRINTS" id="PR01467">
    <property type="entry name" value="ARGREPRESSOR"/>
</dbReference>
<dbReference type="SUPFAM" id="SSF55252">
    <property type="entry name" value="C-terminal domain of arginine repressor"/>
    <property type="match status" value="1"/>
</dbReference>
<dbReference type="SUPFAM" id="SSF46785">
    <property type="entry name" value="Winged helix' DNA-binding domain"/>
    <property type="match status" value="1"/>
</dbReference>
<name>ARGR_CHLL3</name>
<sequence>MNKHIRQQRIRELIQQEGVGNQHDLLRLLRESGIKVAQATLSRDCAELGIVRSKTHAGYRLLLGDESTGRIIKGLVGMEVTSVAANETSVIVRTLPGRAHGVGSWLDQFKSQLILGTIAGDDTVLVIPDSVQNISVLMSYIQKNLSTN</sequence>